<reference key="1">
    <citation type="journal article" date="2007" name="Proc. Natl. Acad. Sci. U.S.A.">
        <title>The genome of Syntrophus aciditrophicus: life at the thermodynamic limit of microbial growth.</title>
        <authorList>
            <person name="McInerney M.J."/>
            <person name="Rohlin L."/>
            <person name="Mouttaki H."/>
            <person name="Kim U."/>
            <person name="Krupp R.S."/>
            <person name="Rios-Hernandez L."/>
            <person name="Sieber J."/>
            <person name="Struchtemeyer C.G."/>
            <person name="Bhattacharyya A."/>
            <person name="Campbell J.W."/>
            <person name="Gunsalus R.P."/>
        </authorList>
    </citation>
    <scope>NUCLEOTIDE SEQUENCE [LARGE SCALE GENOMIC DNA]</scope>
    <source>
        <strain>SB</strain>
    </source>
</reference>
<gene>
    <name evidence="1" type="primary">rplM</name>
    <name type="ordered locus">SYNAS_03350</name>
    <name type="ORF">SYN_00232</name>
</gene>
<dbReference type="EMBL" id="CP000252">
    <property type="protein sequence ID" value="ABC76214.1"/>
    <property type="molecule type" value="Genomic_DNA"/>
</dbReference>
<dbReference type="RefSeq" id="WP_011416248.1">
    <property type="nucleotide sequence ID" value="NC_007759.1"/>
</dbReference>
<dbReference type="SMR" id="Q2LPM2"/>
<dbReference type="FunCoup" id="Q2LPM2">
    <property type="interactions" value="597"/>
</dbReference>
<dbReference type="STRING" id="56780.SYN_00232"/>
<dbReference type="KEGG" id="sat:SYN_00232"/>
<dbReference type="eggNOG" id="COG0102">
    <property type="taxonomic scope" value="Bacteria"/>
</dbReference>
<dbReference type="HOGENOM" id="CLU_082184_2_2_7"/>
<dbReference type="InParanoid" id="Q2LPM2"/>
<dbReference type="OrthoDB" id="9801330at2"/>
<dbReference type="Proteomes" id="UP000001933">
    <property type="component" value="Chromosome"/>
</dbReference>
<dbReference type="GO" id="GO:0022625">
    <property type="term" value="C:cytosolic large ribosomal subunit"/>
    <property type="evidence" value="ECO:0007669"/>
    <property type="project" value="TreeGrafter"/>
</dbReference>
<dbReference type="GO" id="GO:0003729">
    <property type="term" value="F:mRNA binding"/>
    <property type="evidence" value="ECO:0007669"/>
    <property type="project" value="TreeGrafter"/>
</dbReference>
<dbReference type="GO" id="GO:0003735">
    <property type="term" value="F:structural constituent of ribosome"/>
    <property type="evidence" value="ECO:0007669"/>
    <property type="project" value="InterPro"/>
</dbReference>
<dbReference type="GO" id="GO:0017148">
    <property type="term" value="P:negative regulation of translation"/>
    <property type="evidence" value="ECO:0007669"/>
    <property type="project" value="TreeGrafter"/>
</dbReference>
<dbReference type="GO" id="GO:0006412">
    <property type="term" value="P:translation"/>
    <property type="evidence" value="ECO:0007669"/>
    <property type="project" value="UniProtKB-UniRule"/>
</dbReference>
<dbReference type="CDD" id="cd00392">
    <property type="entry name" value="Ribosomal_L13"/>
    <property type="match status" value="1"/>
</dbReference>
<dbReference type="FunFam" id="3.90.1180.10:FF:000001">
    <property type="entry name" value="50S ribosomal protein L13"/>
    <property type="match status" value="1"/>
</dbReference>
<dbReference type="Gene3D" id="3.90.1180.10">
    <property type="entry name" value="Ribosomal protein L13"/>
    <property type="match status" value="1"/>
</dbReference>
<dbReference type="HAMAP" id="MF_01366">
    <property type="entry name" value="Ribosomal_uL13"/>
    <property type="match status" value="1"/>
</dbReference>
<dbReference type="InterPro" id="IPR005822">
    <property type="entry name" value="Ribosomal_uL13"/>
</dbReference>
<dbReference type="InterPro" id="IPR005823">
    <property type="entry name" value="Ribosomal_uL13_bac-type"/>
</dbReference>
<dbReference type="InterPro" id="IPR023563">
    <property type="entry name" value="Ribosomal_uL13_CS"/>
</dbReference>
<dbReference type="InterPro" id="IPR036899">
    <property type="entry name" value="Ribosomal_uL13_sf"/>
</dbReference>
<dbReference type="NCBIfam" id="TIGR01066">
    <property type="entry name" value="rplM_bact"/>
    <property type="match status" value="1"/>
</dbReference>
<dbReference type="PANTHER" id="PTHR11545:SF2">
    <property type="entry name" value="LARGE RIBOSOMAL SUBUNIT PROTEIN UL13M"/>
    <property type="match status" value="1"/>
</dbReference>
<dbReference type="PANTHER" id="PTHR11545">
    <property type="entry name" value="RIBOSOMAL PROTEIN L13"/>
    <property type="match status" value="1"/>
</dbReference>
<dbReference type="Pfam" id="PF00572">
    <property type="entry name" value="Ribosomal_L13"/>
    <property type="match status" value="1"/>
</dbReference>
<dbReference type="PIRSF" id="PIRSF002181">
    <property type="entry name" value="Ribosomal_L13"/>
    <property type="match status" value="1"/>
</dbReference>
<dbReference type="SUPFAM" id="SSF52161">
    <property type="entry name" value="Ribosomal protein L13"/>
    <property type="match status" value="1"/>
</dbReference>
<dbReference type="PROSITE" id="PS00783">
    <property type="entry name" value="RIBOSOMAL_L13"/>
    <property type="match status" value="1"/>
</dbReference>
<comment type="function">
    <text evidence="1">This protein is one of the early assembly proteins of the 50S ribosomal subunit, although it is not seen to bind rRNA by itself. It is important during the early stages of 50S assembly.</text>
</comment>
<comment type="subunit">
    <text evidence="1">Part of the 50S ribosomal subunit.</text>
</comment>
<comment type="similarity">
    <text evidence="1">Belongs to the universal ribosomal protein uL13 family.</text>
</comment>
<sequence length="142" mass="16259">MKTYQAKESEVAREWYLIDAEGQVLGRMASEIARRLRGKHKPEYTPHVDTGDFIVVVNAEKMVLTGKKLRDKIYYHHSGYPGGLKEKTAGKMMQEKPTDVLWLAVKGMLPKNSLGRRMLRKLKVYAGNDHRHEAQCPKVLPL</sequence>
<keyword id="KW-1185">Reference proteome</keyword>
<keyword id="KW-0687">Ribonucleoprotein</keyword>
<keyword id="KW-0689">Ribosomal protein</keyword>
<accession>Q2LPM2</accession>
<proteinExistence type="inferred from homology"/>
<name>RL13_SYNAS</name>
<feature type="chain" id="PRO_0000261813" description="Large ribosomal subunit protein uL13">
    <location>
        <begin position="1"/>
        <end position="142"/>
    </location>
</feature>
<evidence type="ECO:0000255" key="1">
    <source>
        <dbReference type="HAMAP-Rule" id="MF_01366"/>
    </source>
</evidence>
<evidence type="ECO:0000305" key="2"/>
<organism>
    <name type="scientific">Syntrophus aciditrophicus (strain SB)</name>
    <dbReference type="NCBI Taxonomy" id="56780"/>
    <lineage>
        <taxon>Bacteria</taxon>
        <taxon>Pseudomonadati</taxon>
        <taxon>Thermodesulfobacteriota</taxon>
        <taxon>Syntrophia</taxon>
        <taxon>Syntrophales</taxon>
        <taxon>Syntrophaceae</taxon>
        <taxon>Syntrophus</taxon>
    </lineage>
</organism>
<protein>
    <recommendedName>
        <fullName evidence="1">Large ribosomal subunit protein uL13</fullName>
    </recommendedName>
    <alternativeName>
        <fullName evidence="2">50S ribosomal protein L13</fullName>
    </alternativeName>
</protein>